<protein>
    <recommendedName>
        <fullName evidence="1">Large ribosomal subunit protein uL5</fullName>
    </recommendedName>
    <alternativeName>
        <fullName evidence="2">50S ribosomal protein L5</fullName>
    </alternativeName>
</protein>
<feature type="chain" id="PRO_1000052694" description="Large ribosomal subunit protein uL5">
    <location>
        <begin position="1"/>
        <end position="181"/>
    </location>
</feature>
<comment type="function">
    <text evidence="1">This is one of the proteins that bind and probably mediate the attachment of the 5S RNA into the large ribosomal subunit, where it forms part of the central protuberance. In the 70S ribosome it contacts protein S13 of the 30S subunit (bridge B1b), connecting the 2 subunits; this bridge is implicated in subunit movement. Contacts the P site tRNA; the 5S rRNA and some of its associated proteins might help stabilize positioning of ribosome-bound tRNAs.</text>
</comment>
<comment type="subunit">
    <text evidence="1">Part of the 50S ribosomal subunit; part of the 5S rRNA/L5/L18/L25 subcomplex. Contacts the 5S rRNA and the P site tRNA. Forms a bridge to the 30S subunit in the 70S ribosome.</text>
</comment>
<comment type="similarity">
    <text evidence="1">Belongs to the universal ribosomal protein uL5 family.</text>
</comment>
<gene>
    <name evidence="1" type="primary">rplE</name>
    <name type="ordered locus">BCI_0340</name>
</gene>
<keyword id="KW-1185">Reference proteome</keyword>
<keyword id="KW-0687">Ribonucleoprotein</keyword>
<keyword id="KW-0689">Ribosomal protein</keyword>
<keyword id="KW-0694">RNA-binding</keyword>
<keyword id="KW-0699">rRNA-binding</keyword>
<keyword id="KW-0820">tRNA-binding</keyword>
<name>RL5_BAUCH</name>
<dbReference type="EMBL" id="CP000238">
    <property type="protein sequence ID" value="ABF13848.1"/>
    <property type="molecule type" value="Genomic_DNA"/>
</dbReference>
<dbReference type="RefSeq" id="WP_011520521.1">
    <property type="nucleotide sequence ID" value="NC_007984.1"/>
</dbReference>
<dbReference type="SMR" id="Q1LTC6"/>
<dbReference type="STRING" id="374463.BCI_0340"/>
<dbReference type="KEGG" id="bci:BCI_0340"/>
<dbReference type="HOGENOM" id="CLU_061015_2_1_6"/>
<dbReference type="OrthoDB" id="9806626at2"/>
<dbReference type="Proteomes" id="UP000002427">
    <property type="component" value="Chromosome"/>
</dbReference>
<dbReference type="GO" id="GO:1990904">
    <property type="term" value="C:ribonucleoprotein complex"/>
    <property type="evidence" value="ECO:0007669"/>
    <property type="project" value="UniProtKB-KW"/>
</dbReference>
<dbReference type="GO" id="GO:0005840">
    <property type="term" value="C:ribosome"/>
    <property type="evidence" value="ECO:0007669"/>
    <property type="project" value="UniProtKB-KW"/>
</dbReference>
<dbReference type="GO" id="GO:0019843">
    <property type="term" value="F:rRNA binding"/>
    <property type="evidence" value="ECO:0007669"/>
    <property type="project" value="UniProtKB-UniRule"/>
</dbReference>
<dbReference type="GO" id="GO:0003735">
    <property type="term" value="F:structural constituent of ribosome"/>
    <property type="evidence" value="ECO:0007669"/>
    <property type="project" value="InterPro"/>
</dbReference>
<dbReference type="GO" id="GO:0000049">
    <property type="term" value="F:tRNA binding"/>
    <property type="evidence" value="ECO:0007669"/>
    <property type="project" value="UniProtKB-UniRule"/>
</dbReference>
<dbReference type="GO" id="GO:0006412">
    <property type="term" value="P:translation"/>
    <property type="evidence" value="ECO:0007669"/>
    <property type="project" value="UniProtKB-UniRule"/>
</dbReference>
<dbReference type="FunFam" id="3.30.1440.10:FF:000001">
    <property type="entry name" value="50S ribosomal protein L5"/>
    <property type="match status" value="1"/>
</dbReference>
<dbReference type="Gene3D" id="3.30.1440.10">
    <property type="match status" value="1"/>
</dbReference>
<dbReference type="HAMAP" id="MF_01333_B">
    <property type="entry name" value="Ribosomal_uL5_B"/>
    <property type="match status" value="1"/>
</dbReference>
<dbReference type="InterPro" id="IPR002132">
    <property type="entry name" value="Ribosomal_uL5"/>
</dbReference>
<dbReference type="InterPro" id="IPR020930">
    <property type="entry name" value="Ribosomal_uL5_bac-type"/>
</dbReference>
<dbReference type="InterPro" id="IPR031309">
    <property type="entry name" value="Ribosomal_uL5_C"/>
</dbReference>
<dbReference type="InterPro" id="IPR020929">
    <property type="entry name" value="Ribosomal_uL5_CS"/>
</dbReference>
<dbReference type="InterPro" id="IPR022803">
    <property type="entry name" value="Ribosomal_uL5_dom_sf"/>
</dbReference>
<dbReference type="InterPro" id="IPR031310">
    <property type="entry name" value="Ribosomal_uL5_N"/>
</dbReference>
<dbReference type="NCBIfam" id="NF000585">
    <property type="entry name" value="PRK00010.1"/>
    <property type="match status" value="1"/>
</dbReference>
<dbReference type="PANTHER" id="PTHR11994">
    <property type="entry name" value="60S RIBOSOMAL PROTEIN L11-RELATED"/>
    <property type="match status" value="1"/>
</dbReference>
<dbReference type="Pfam" id="PF00281">
    <property type="entry name" value="Ribosomal_L5"/>
    <property type="match status" value="1"/>
</dbReference>
<dbReference type="Pfam" id="PF00673">
    <property type="entry name" value="Ribosomal_L5_C"/>
    <property type="match status" value="1"/>
</dbReference>
<dbReference type="PIRSF" id="PIRSF002161">
    <property type="entry name" value="Ribosomal_L5"/>
    <property type="match status" value="1"/>
</dbReference>
<dbReference type="SUPFAM" id="SSF55282">
    <property type="entry name" value="RL5-like"/>
    <property type="match status" value="1"/>
</dbReference>
<dbReference type="PROSITE" id="PS00358">
    <property type="entry name" value="RIBOSOMAL_L5"/>
    <property type="match status" value="1"/>
</dbReference>
<reference key="1">
    <citation type="journal article" date="2006" name="PLoS Biol.">
        <title>Metabolic complementarity and genomics of the dual bacterial symbiosis of sharpshooters.</title>
        <authorList>
            <person name="Wu D."/>
            <person name="Daugherty S.C."/>
            <person name="Van Aken S.E."/>
            <person name="Pai G.H."/>
            <person name="Watkins K.L."/>
            <person name="Khouri H."/>
            <person name="Tallon L.J."/>
            <person name="Zaborsky J.M."/>
            <person name="Dunbar H.E."/>
            <person name="Tran P.L."/>
            <person name="Moran N.A."/>
            <person name="Eisen J.A."/>
        </authorList>
    </citation>
    <scope>NUCLEOTIDE SEQUENCE [LARGE SCALE GENOMIC DNA]</scope>
</reference>
<proteinExistence type="inferred from homology"/>
<accession>Q1LTC6</accession>
<organism>
    <name type="scientific">Baumannia cicadellinicola subsp. Homalodisca coagulata</name>
    <dbReference type="NCBI Taxonomy" id="374463"/>
    <lineage>
        <taxon>Bacteria</taxon>
        <taxon>Pseudomonadati</taxon>
        <taxon>Pseudomonadota</taxon>
        <taxon>Gammaproteobacteria</taxon>
        <taxon>Candidatus Palibaumannia</taxon>
    </lineage>
</organism>
<sequence length="181" mass="20610">MAKLSDIYQEQVIDKLINQFSYKSRMQVPNIEKIILNMGVGQTVTDKKLLDNAVANLTAISGQKPIITKARKSIASFKIRHGYPIGCKVTLRGKRMWEFFDKLISIVIPRIRDFRGFSIKSFDGRGNYSIGVVEQIIFPEIDYDKIDRVRGMNITITTTANSNNEGYALLSALNFPFRKNK</sequence>
<evidence type="ECO:0000255" key="1">
    <source>
        <dbReference type="HAMAP-Rule" id="MF_01333"/>
    </source>
</evidence>
<evidence type="ECO:0000305" key="2"/>